<dbReference type="EC" id="6.3.4.3" evidence="1"/>
<dbReference type="EMBL" id="AE009949">
    <property type="protein sequence ID" value="AAL98593.1"/>
    <property type="molecule type" value="Genomic_DNA"/>
</dbReference>
<dbReference type="RefSeq" id="WP_011018299.1">
    <property type="nucleotide sequence ID" value="NC_003485.1"/>
</dbReference>
<dbReference type="SMR" id="Q8NZ49"/>
<dbReference type="KEGG" id="spm:spyM18_2144"/>
<dbReference type="HOGENOM" id="CLU_003601_3_3_9"/>
<dbReference type="UniPathway" id="UPA00193"/>
<dbReference type="GO" id="GO:0005524">
    <property type="term" value="F:ATP binding"/>
    <property type="evidence" value="ECO:0007669"/>
    <property type="project" value="UniProtKB-UniRule"/>
</dbReference>
<dbReference type="GO" id="GO:0004329">
    <property type="term" value="F:formate-tetrahydrofolate ligase activity"/>
    <property type="evidence" value="ECO:0007669"/>
    <property type="project" value="UniProtKB-UniRule"/>
</dbReference>
<dbReference type="GO" id="GO:0035999">
    <property type="term" value="P:tetrahydrofolate interconversion"/>
    <property type="evidence" value="ECO:0007669"/>
    <property type="project" value="UniProtKB-UniRule"/>
</dbReference>
<dbReference type="CDD" id="cd00477">
    <property type="entry name" value="FTHFS"/>
    <property type="match status" value="1"/>
</dbReference>
<dbReference type="FunFam" id="3.30.1510.10:FF:000001">
    <property type="entry name" value="Formate--tetrahydrofolate ligase"/>
    <property type="match status" value="1"/>
</dbReference>
<dbReference type="FunFam" id="3.10.410.10:FF:000001">
    <property type="entry name" value="Putative formate--tetrahydrofolate ligase"/>
    <property type="match status" value="1"/>
</dbReference>
<dbReference type="Gene3D" id="3.30.1510.10">
    <property type="entry name" value="Domain 2, N(10)-formyltetrahydrofolate synthetase"/>
    <property type="match status" value="1"/>
</dbReference>
<dbReference type="Gene3D" id="3.10.410.10">
    <property type="entry name" value="Formyltetrahydrofolate synthetase, domain 3"/>
    <property type="match status" value="1"/>
</dbReference>
<dbReference type="Gene3D" id="3.40.50.300">
    <property type="entry name" value="P-loop containing nucleotide triphosphate hydrolases"/>
    <property type="match status" value="1"/>
</dbReference>
<dbReference type="HAMAP" id="MF_01543">
    <property type="entry name" value="FTHFS"/>
    <property type="match status" value="1"/>
</dbReference>
<dbReference type="InterPro" id="IPR000559">
    <property type="entry name" value="Formate_THF_ligase"/>
</dbReference>
<dbReference type="InterPro" id="IPR020628">
    <property type="entry name" value="Formate_THF_ligase_CS"/>
</dbReference>
<dbReference type="InterPro" id="IPR027417">
    <property type="entry name" value="P-loop_NTPase"/>
</dbReference>
<dbReference type="NCBIfam" id="NF010030">
    <property type="entry name" value="PRK13505.1"/>
    <property type="match status" value="1"/>
</dbReference>
<dbReference type="Pfam" id="PF01268">
    <property type="entry name" value="FTHFS"/>
    <property type="match status" value="1"/>
</dbReference>
<dbReference type="SUPFAM" id="SSF52540">
    <property type="entry name" value="P-loop containing nucleoside triphosphate hydrolases"/>
    <property type="match status" value="1"/>
</dbReference>
<dbReference type="PROSITE" id="PS00721">
    <property type="entry name" value="FTHFS_1"/>
    <property type="match status" value="1"/>
</dbReference>
<dbReference type="PROSITE" id="PS00722">
    <property type="entry name" value="FTHFS_2"/>
    <property type="match status" value="1"/>
</dbReference>
<name>FTHS2_STRP8</name>
<organism>
    <name type="scientific">Streptococcus pyogenes serotype M18 (strain MGAS8232)</name>
    <dbReference type="NCBI Taxonomy" id="186103"/>
    <lineage>
        <taxon>Bacteria</taxon>
        <taxon>Bacillati</taxon>
        <taxon>Bacillota</taxon>
        <taxon>Bacilli</taxon>
        <taxon>Lactobacillales</taxon>
        <taxon>Streptococcaceae</taxon>
        <taxon>Streptococcus</taxon>
    </lineage>
</organism>
<sequence length="557" mass="59054">MVLSDIEIANSVTMEPISKVANQLGIDEEALCLYGKYKAKIDARQLVALKDKPDGKLILVTAISPTPAGEGKTTTSVGLVDALSAIGKKAVIALREPSLGPVFGVKGGAAGGGHAQVVPMEDINLHFTGDFHAIGVANNLLAALIDNHIHHGNSLGIDSRRITWKRVVDMNDRQLRHIVDGLQGKVNGVPREDGYDITVASEIMAILCLSENISDLKARLEKIIIGYNYQGEPVTAKDLKAGGALAALLKDAIHPNLVQTLEHTPALIHGGPFANIAHGCNSVLATKLALKYGDYAVTEAGFGADLGAEKFIDIKCRMSGLRPAAVVLVATIRALKMHGGVPKADLATENVQAVVDGLPNLDKHLANIQDVYGLPVVVAINKFPLDTDAELQAVYDACDKRGVDVVISDVWANGGAGGRELAEKVVALAEQDNQFCFVYEEDDSIETKLTKIVTKVYGGKGIRLTPAAKRELADLERLSFGNYPICMAKTQYSFSDDAKKLGAPTDFTVTISNLKVSAGAGFIVALTGAIMTMPGLPKVPASETIDIDEEGNITGLF</sequence>
<evidence type="ECO:0000255" key="1">
    <source>
        <dbReference type="HAMAP-Rule" id="MF_01543"/>
    </source>
</evidence>
<proteinExistence type="inferred from homology"/>
<gene>
    <name evidence="1" type="primary">fhs2</name>
    <name type="ordered locus">spyM18_2144</name>
</gene>
<accession>Q8NZ49</accession>
<protein>
    <recommendedName>
        <fullName evidence="1">Formate--tetrahydrofolate ligase 2</fullName>
        <ecNumber evidence="1">6.3.4.3</ecNumber>
    </recommendedName>
    <alternativeName>
        <fullName evidence="1">Formyltetrahydrofolate synthetase 2</fullName>
        <shortName evidence="1">FHS 2</shortName>
        <shortName evidence="1">FTHFS 2</shortName>
    </alternativeName>
</protein>
<comment type="catalytic activity">
    <reaction evidence="1">
        <text>(6S)-5,6,7,8-tetrahydrofolate + formate + ATP = (6R)-10-formyltetrahydrofolate + ADP + phosphate</text>
        <dbReference type="Rhea" id="RHEA:20221"/>
        <dbReference type="ChEBI" id="CHEBI:15740"/>
        <dbReference type="ChEBI" id="CHEBI:30616"/>
        <dbReference type="ChEBI" id="CHEBI:43474"/>
        <dbReference type="ChEBI" id="CHEBI:57453"/>
        <dbReference type="ChEBI" id="CHEBI:195366"/>
        <dbReference type="ChEBI" id="CHEBI:456216"/>
        <dbReference type="EC" id="6.3.4.3"/>
    </reaction>
</comment>
<comment type="pathway">
    <text evidence="1">One-carbon metabolism; tetrahydrofolate interconversion.</text>
</comment>
<comment type="similarity">
    <text evidence="1">Belongs to the formate--tetrahydrofolate ligase family.</text>
</comment>
<keyword id="KW-0067">ATP-binding</keyword>
<keyword id="KW-0436">Ligase</keyword>
<keyword id="KW-0547">Nucleotide-binding</keyword>
<keyword id="KW-0554">One-carbon metabolism</keyword>
<reference key="1">
    <citation type="journal article" date="2002" name="Proc. Natl. Acad. Sci. U.S.A.">
        <title>Genome sequence and comparative microarray analysis of serotype M18 group A Streptococcus strains associated with acute rheumatic fever outbreaks.</title>
        <authorList>
            <person name="Smoot J.C."/>
            <person name="Barbian K.D."/>
            <person name="Van Gompel J.J."/>
            <person name="Smoot L.M."/>
            <person name="Chaussee M.S."/>
            <person name="Sylva G.L."/>
            <person name="Sturdevant D.E."/>
            <person name="Ricklefs S.M."/>
            <person name="Porcella S.F."/>
            <person name="Parkins L.D."/>
            <person name="Beres S.B."/>
            <person name="Campbell D.S."/>
            <person name="Smith T.M."/>
            <person name="Zhang Q."/>
            <person name="Kapur V."/>
            <person name="Daly J.A."/>
            <person name="Veasy L.G."/>
            <person name="Musser J.M."/>
        </authorList>
    </citation>
    <scope>NUCLEOTIDE SEQUENCE [LARGE SCALE GENOMIC DNA]</scope>
    <source>
        <strain>MGAS8232</strain>
    </source>
</reference>
<feature type="chain" id="PRO_0000199392" description="Formate--tetrahydrofolate ligase 2">
    <location>
        <begin position="1"/>
        <end position="557"/>
    </location>
</feature>
<feature type="binding site" evidence="1">
    <location>
        <begin position="66"/>
        <end position="73"/>
    </location>
    <ligand>
        <name>ATP</name>
        <dbReference type="ChEBI" id="CHEBI:30616"/>
    </ligand>
</feature>